<keyword id="KW-0067">ATP-binding</keyword>
<keyword id="KW-0963">Cytoplasm</keyword>
<keyword id="KW-0436">Ligase</keyword>
<keyword id="KW-0547">Nucleotide-binding</keyword>
<keyword id="KW-0566">Pantothenate biosynthesis</keyword>
<comment type="function">
    <text evidence="1">Catalyzes the condensation of pantoate with beta-alanine in an ATP-dependent reaction via a pantoyl-adenylate intermediate.</text>
</comment>
<comment type="catalytic activity">
    <reaction evidence="1">
        <text>(R)-pantoate + beta-alanine + ATP = (R)-pantothenate + AMP + diphosphate + H(+)</text>
        <dbReference type="Rhea" id="RHEA:10912"/>
        <dbReference type="ChEBI" id="CHEBI:15378"/>
        <dbReference type="ChEBI" id="CHEBI:15980"/>
        <dbReference type="ChEBI" id="CHEBI:29032"/>
        <dbReference type="ChEBI" id="CHEBI:30616"/>
        <dbReference type="ChEBI" id="CHEBI:33019"/>
        <dbReference type="ChEBI" id="CHEBI:57966"/>
        <dbReference type="ChEBI" id="CHEBI:456215"/>
        <dbReference type="EC" id="6.3.2.1"/>
    </reaction>
</comment>
<comment type="pathway">
    <text evidence="1">Cofactor biosynthesis; (R)-pantothenate biosynthesis; (R)-pantothenate from (R)-pantoate and beta-alanine: step 1/1.</text>
</comment>
<comment type="subunit">
    <text evidence="1">Homodimer.</text>
</comment>
<comment type="subcellular location">
    <subcellularLocation>
        <location evidence="1">Cytoplasm</location>
    </subcellularLocation>
</comment>
<comment type="miscellaneous">
    <text evidence="1">The reaction proceeds by a bi uni uni bi ping pong mechanism.</text>
</comment>
<comment type="similarity">
    <text evidence="1">Belongs to the pantothenate synthetase family.</text>
</comment>
<reference key="1">
    <citation type="journal article" date="2005" name="J. Bacteriol.">
        <title>Whole-genome sequence analysis of Pseudomonas syringae pv. phaseolicola 1448A reveals divergence among pathovars in genes involved in virulence and transposition.</title>
        <authorList>
            <person name="Joardar V."/>
            <person name="Lindeberg M."/>
            <person name="Jackson R.W."/>
            <person name="Selengut J."/>
            <person name="Dodson R."/>
            <person name="Brinkac L.M."/>
            <person name="Daugherty S.C."/>
            <person name="DeBoy R.T."/>
            <person name="Durkin A.S."/>
            <person name="Gwinn Giglio M."/>
            <person name="Madupu R."/>
            <person name="Nelson W.C."/>
            <person name="Rosovitz M.J."/>
            <person name="Sullivan S.A."/>
            <person name="Crabtree J."/>
            <person name="Creasy T."/>
            <person name="Davidsen T.M."/>
            <person name="Haft D.H."/>
            <person name="Zafar N."/>
            <person name="Zhou L."/>
            <person name="Halpin R."/>
            <person name="Holley T."/>
            <person name="Khouri H.M."/>
            <person name="Feldblyum T.V."/>
            <person name="White O."/>
            <person name="Fraser C.M."/>
            <person name="Chatterjee A.K."/>
            <person name="Cartinhour S."/>
            <person name="Schneider D."/>
            <person name="Mansfield J.W."/>
            <person name="Collmer A."/>
            <person name="Buell R."/>
        </authorList>
    </citation>
    <scope>NUCLEOTIDE SEQUENCE [LARGE SCALE GENOMIC DNA]</scope>
    <source>
        <strain>1448A / Race 6</strain>
    </source>
</reference>
<feature type="chain" id="PRO_0000305518" description="Pantothenate synthetase">
    <location>
        <begin position="1"/>
        <end position="283"/>
    </location>
</feature>
<feature type="active site" description="Proton donor" evidence="1">
    <location>
        <position position="37"/>
    </location>
</feature>
<feature type="binding site" evidence="1">
    <location>
        <begin position="30"/>
        <end position="37"/>
    </location>
    <ligand>
        <name>ATP</name>
        <dbReference type="ChEBI" id="CHEBI:30616"/>
    </ligand>
</feature>
<feature type="binding site" evidence="1">
    <location>
        <position position="61"/>
    </location>
    <ligand>
        <name>(R)-pantoate</name>
        <dbReference type="ChEBI" id="CHEBI:15980"/>
    </ligand>
</feature>
<feature type="binding site" evidence="1">
    <location>
        <position position="61"/>
    </location>
    <ligand>
        <name>beta-alanine</name>
        <dbReference type="ChEBI" id="CHEBI:57966"/>
    </ligand>
</feature>
<feature type="binding site" evidence="1">
    <location>
        <begin position="149"/>
        <end position="152"/>
    </location>
    <ligand>
        <name>ATP</name>
        <dbReference type="ChEBI" id="CHEBI:30616"/>
    </ligand>
</feature>
<feature type="binding site" evidence="1">
    <location>
        <position position="155"/>
    </location>
    <ligand>
        <name>(R)-pantoate</name>
        <dbReference type="ChEBI" id="CHEBI:15980"/>
    </ligand>
</feature>
<feature type="binding site" evidence="1">
    <location>
        <position position="178"/>
    </location>
    <ligand>
        <name>ATP</name>
        <dbReference type="ChEBI" id="CHEBI:30616"/>
    </ligand>
</feature>
<feature type="binding site" evidence="1">
    <location>
        <begin position="186"/>
        <end position="189"/>
    </location>
    <ligand>
        <name>ATP</name>
        <dbReference type="ChEBI" id="CHEBI:30616"/>
    </ligand>
</feature>
<proteinExistence type="inferred from homology"/>
<gene>
    <name evidence="1" type="primary">panC</name>
    <name type="ordered locus">PSPPH_0853</name>
</gene>
<organism>
    <name type="scientific">Pseudomonas savastanoi pv. phaseolicola (strain 1448A / Race 6)</name>
    <name type="common">Pseudomonas syringae pv. phaseolicola (strain 1448A / Race 6)</name>
    <dbReference type="NCBI Taxonomy" id="264730"/>
    <lineage>
        <taxon>Bacteria</taxon>
        <taxon>Pseudomonadati</taxon>
        <taxon>Pseudomonadota</taxon>
        <taxon>Gammaproteobacteria</taxon>
        <taxon>Pseudomonadales</taxon>
        <taxon>Pseudomonadaceae</taxon>
        <taxon>Pseudomonas</taxon>
    </lineage>
</organism>
<sequence length="283" mass="30706">MNTVKTVQELRAAVARARSEGKRIALTPTMGNLHSGHAALVAKAAQRADFVVATIFINPLQFGPNEDLATYPRTLAADQEKLLQAGCNLLFTPSVEEMYPHGMADQTLVSVPHLSQGLCGASRPGHFEGVATVVSKLFNMVQPDLAIFGEKDFQQLAVIRAMVRDLNMPIQIIGEPTVRAEDGLALSSRNGYLNEAQRAAAPALYQAIRQTADAISAGEQDFDALLTSKKQQLEAAGFRIDYLEIRDATSLRPTTAENRDVVILAAAFLGKTRLIDNLHLTRS</sequence>
<protein>
    <recommendedName>
        <fullName evidence="1">Pantothenate synthetase</fullName>
        <shortName evidence="1">PS</shortName>
        <ecNumber evidence="1">6.3.2.1</ecNumber>
    </recommendedName>
    <alternativeName>
        <fullName evidence="1">Pantoate--beta-alanine ligase</fullName>
    </alternativeName>
    <alternativeName>
        <fullName evidence="1">Pantoate-activating enzyme</fullName>
    </alternativeName>
</protein>
<dbReference type="EC" id="6.3.2.1" evidence="1"/>
<dbReference type="EMBL" id="CP000058">
    <property type="protein sequence ID" value="AAZ34337.1"/>
    <property type="molecule type" value="Genomic_DNA"/>
</dbReference>
<dbReference type="RefSeq" id="WP_011167750.1">
    <property type="nucleotide sequence ID" value="NC_005773.3"/>
</dbReference>
<dbReference type="SMR" id="Q48N87"/>
<dbReference type="KEGG" id="psp:PSPPH_0853"/>
<dbReference type="eggNOG" id="COG0414">
    <property type="taxonomic scope" value="Bacteria"/>
</dbReference>
<dbReference type="HOGENOM" id="CLU_047148_0_0_6"/>
<dbReference type="UniPathway" id="UPA00028">
    <property type="reaction ID" value="UER00005"/>
</dbReference>
<dbReference type="Proteomes" id="UP000000551">
    <property type="component" value="Chromosome"/>
</dbReference>
<dbReference type="GO" id="GO:0005829">
    <property type="term" value="C:cytosol"/>
    <property type="evidence" value="ECO:0007669"/>
    <property type="project" value="TreeGrafter"/>
</dbReference>
<dbReference type="GO" id="GO:0005524">
    <property type="term" value="F:ATP binding"/>
    <property type="evidence" value="ECO:0007669"/>
    <property type="project" value="UniProtKB-KW"/>
</dbReference>
<dbReference type="GO" id="GO:0004592">
    <property type="term" value="F:pantoate-beta-alanine ligase activity"/>
    <property type="evidence" value="ECO:0007669"/>
    <property type="project" value="UniProtKB-UniRule"/>
</dbReference>
<dbReference type="GO" id="GO:0015940">
    <property type="term" value="P:pantothenate biosynthetic process"/>
    <property type="evidence" value="ECO:0007669"/>
    <property type="project" value="UniProtKB-UniRule"/>
</dbReference>
<dbReference type="CDD" id="cd00560">
    <property type="entry name" value="PanC"/>
    <property type="match status" value="1"/>
</dbReference>
<dbReference type="FunFam" id="3.30.1300.10:FF:000001">
    <property type="entry name" value="Pantothenate synthetase"/>
    <property type="match status" value="1"/>
</dbReference>
<dbReference type="FunFam" id="3.40.50.620:FF:000013">
    <property type="entry name" value="Pantothenate synthetase"/>
    <property type="match status" value="1"/>
</dbReference>
<dbReference type="Gene3D" id="3.40.50.620">
    <property type="entry name" value="HUPs"/>
    <property type="match status" value="1"/>
</dbReference>
<dbReference type="Gene3D" id="3.30.1300.10">
    <property type="entry name" value="Pantoate-beta-alanine ligase, C-terminal domain"/>
    <property type="match status" value="1"/>
</dbReference>
<dbReference type="HAMAP" id="MF_00158">
    <property type="entry name" value="PanC"/>
    <property type="match status" value="1"/>
</dbReference>
<dbReference type="InterPro" id="IPR003721">
    <property type="entry name" value="Pantoate_ligase"/>
</dbReference>
<dbReference type="InterPro" id="IPR042176">
    <property type="entry name" value="Pantoate_ligase_C"/>
</dbReference>
<dbReference type="InterPro" id="IPR014729">
    <property type="entry name" value="Rossmann-like_a/b/a_fold"/>
</dbReference>
<dbReference type="NCBIfam" id="TIGR00018">
    <property type="entry name" value="panC"/>
    <property type="match status" value="1"/>
</dbReference>
<dbReference type="PANTHER" id="PTHR21299">
    <property type="entry name" value="CYTIDYLATE KINASE/PANTOATE-BETA-ALANINE LIGASE"/>
    <property type="match status" value="1"/>
</dbReference>
<dbReference type="PANTHER" id="PTHR21299:SF1">
    <property type="entry name" value="PANTOATE--BETA-ALANINE LIGASE"/>
    <property type="match status" value="1"/>
</dbReference>
<dbReference type="Pfam" id="PF02569">
    <property type="entry name" value="Pantoate_ligase"/>
    <property type="match status" value="1"/>
</dbReference>
<dbReference type="SUPFAM" id="SSF52374">
    <property type="entry name" value="Nucleotidylyl transferase"/>
    <property type="match status" value="1"/>
</dbReference>
<name>PANC_PSE14</name>
<evidence type="ECO:0000255" key="1">
    <source>
        <dbReference type="HAMAP-Rule" id="MF_00158"/>
    </source>
</evidence>
<accession>Q48N87</accession>